<feature type="chain" id="PRO_1000126855" description="Large ribosomal subunit protein bL9">
    <location>
        <begin position="1"/>
        <end position="148"/>
    </location>
</feature>
<organism>
    <name type="scientific">Acidithiobacillus ferrooxidans (strain ATCC 23270 / DSM 14882 / CIP 104768 / NCIMB 8455)</name>
    <name type="common">Ferrobacillus ferrooxidans (strain ATCC 23270)</name>
    <dbReference type="NCBI Taxonomy" id="243159"/>
    <lineage>
        <taxon>Bacteria</taxon>
        <taxon>Pseudomonadati</taxon>
        <taxon>Pseudomonadota</taxon>
        <taxon>Acidithiobacillia</taxon>
        <taxon>Acidithiobacillales</taxon>
        <taxon>Acidithiobacillaceae</taxon>
        <taxon>Acidithiobacillus</taxon>
    </lineage>
</organism>
<reference key="1">
    <citation type="journal article" date="2008" name="BMC Genomics">
        <title>Acidithiobacillus ferrooxidans metabolism: from genome sequence to industrial applications.</title>
        <authorList>
            <person name="Valdes J."/>
            <person name="Pedroso I."/>
            <person name="Quatrini R."/>
            <person name="Dodson R.J."/>
            <person name="Tettelin H."/>
            <person name="Blake R. II"/>
            <person name="Eisen J.A."/>
            <person name="Holmes D.S."/>
        </authorList>
    </citation>
    <scope>NUCLEOTIDE SEQUENCE [LARGE SCALE GENOMIC DNA]</scope>
    <source>
        <strain>ATCC 23270 / DSM 14882 / CIP 104768 / NCIMB 8455</strain>
    </source>
</reference>
<dbReference type="EMBL" id="CP001219">
    <property type="protein sequence ID" value="ACK78849.1"/>
    <property type="molecule type" value="Genomic_DNA"/>
</dbReference>
<dbReference type="RefSeq" id="WP_012537411.1">
    <property type="nucleotide sequence ID" value="NC_011761.1"/>
</dbReference>
<dbReference type="SMR" id="B7J913"/>
<dbReference type="STRING" id="243159.AFE_2820"/>
<dbReference type="PaxDb" id="243159-AFE_2820"/>
<dbReference type="GeneID" id="65281850"/>
<dbReference type="KEGG" id="afr:AFE_2820"/>
<dbReference type="eggNOG" id="COG0359">
    <property type="taxonomic scope" value="Bacteria"/>
</dbReference>
<dbReference type="HOGENOM" id="CLU_078938_4_1_6"/>
<dbReference type="Proteomes" id="UP000001362">
    <property type="component" value="Chromosome"/>
</dbReference>
<dbReference type="GO" id="GO:1990904">
    <property type="term" value="C:ribonucleoprotein complex"/>
    <property type="evidence" value="ECO:0007669"/>
    <property type="project" value="UniProtKB-KW"/>
</dbReference>
<dbReference type="GO" id="GO:0005840">
    <property type="term" value="C:ribosome"/>
    <property type="evidence" value="ECO:0007669"/>
    <property type="project" value="UniProtKB-KW"/>
</dbReference>
<dbReference type="GO" id="GO:0019843">
    <property type="term" value="F:rRNA binding"/>
    <property type="evidence" value="ECO:0007669"/>
    <property type="project" value="UniProtKB-UniRule"/>
</dbReference>
<dbReference type="GO" id="GO:0003735">
    <property type="term" value="F:structural constituent of ribosome"/>
    <property type="evidence" value="ECO:0007669"/>
    <property type="project" value="InterPro"/>
</dbReference>
<dbReference type="GO" id="GO:0006412">
    <property type="term" value="P:translation"/>
    <property type="evidence" value="ECO:0007669"/>
    <property type="project" value="UniProtKB-UniRule"/>
</dbReference>
<dbReference type="Gene3D" id="3.10.430.100">
    <property type="entry name" value="Ribosomal protein L9, C-terminal domain"/>
    <property type="match status" value="1"/>
</dbReference>
<dbReference type="Gene3D" id="3.40.5.10">
    <property type="entry name" value="Ribosomal protein L9, N-terminal domain"/>
    <property type="match status" value="1"/>
</dbReference>
<dbReference type="HAMAP" id="MF_00503">
    <property type="entry name" value="Ribosomal_bL9"/>
    <property type="match status" value="1"/>
</dbReference>
<dbReference type="InterPro" id="IPR000244">
    <property type="entry name" value="Ribosomal_bL9"/>
</dbReference>
<dbReference type="InterPro" id="IPR009027">
    <property type="entry name" value="Ribosomal_bL9/RNase_H1_N"/>
</dbReference>
<dbReference type="InterPro" id="IPR020594">
    <property type="entry name" value="Ribosomal_bL9_bac/chp"/>
</dbReference>
<dbReference type="InterPro" id="IPR020069">
    <property type="entry name" value="Ribosomal_bL9_C"/>
</dbReference>
<dbReference type="InterPro" id="IPR036791">
    <property type="entry name" value="Ribosomal_bL9_C_sf"/>
</dbReference>
<dbReference type="InterPro" id="IPR020070">
    <property type="entry name" value="Ribosomal_bL9_N"/>
</dbReference>
<dbReference type="InterPro" id="IPR036935">
    <property type="entry name" value="Ribosomal_bL9_N_sf"/>
</dbReference>
<dbReference type="NCBIfam" id="TIGR00158">
    <property type="entry name" value="L9"/>
    <property type="match status" value="1"/>
</dbReference>
<dbReference type="PANTHER" id="PTHR21368">
    <property type="entry name" value="50S RIBOSOMAL PROTEIN L9"/>
    <property type="match status" value="1"/>
</dbReference>
<dbReference type="Pfam" id="PF03948">
    <property type="entry name" value="Ribosomal_L9_C"/>
    <property type="match status" value="1"/>
</dbReference>
<dbReference type="Pfam" id="PF01281">
    <property type="entry name" value="Ribosomal_L9_N"/>
    <property type="match status" value="1"/>
</dbReference>
<dbReference type="SUPFAM" id="SSF55658">
    <property type="entry name" value="L9 N-domain-like"/>
    <property type="match status" value="1"/>
</dbReference>
<dbReference type="SUPFAM" id="SSF55653">
    <property type="entry name" value="Ribosomal protein L9 C-domain"/>
    <property type="match status" value="1"/>
</dbReference>
<dbReference type="PROSITE" id="PS00651">
    <property type="entry name" value="RIBOSOMAL_L9"/>
    <property type="match status" value="1"/>
</dbReference>
<keyword id="KW-1185">Reference proteome</keyword>
<keyword id="KW-0687">Ribonucleoprotein</keyword>
<keyword id="KW-0689">Ribosomal protein</keyword>
<keyword id="KW-0694">RNA-binding</keyword>
<keyword id="KW-0699">rRNA-binding</keyword>
<sequence>MKVILLERINKLGRLGDVVEVRPGYGRNFLVPQGKAVVANQRNLEDFAARKAALEQVEAERLLAAQQRAAALADAMVTIALQAGEDGRLFGSVGLHDISAALAALGHEVAHSEIRLAGGPIKRIGEFPVRVHLHPEVELDVMVFVERA</sequence>
<gene>
    <name evidence="1" type="primary">rplI</name>
    <name type="ordered locus">AFE_2820</name>
</gene>
<protein>
    <recommendedName>
        <fullName evidence="1">Large ribosomal subunit protein bL9</fullName>
    </recommendedName>
    <alternativeName>
        <fullName evidence="2">50S ribosomal protein L9</fullName>
    </alternativeName>
</protein>
<proteinExistence type="inferred from homology"/>
<comment type="function">
    <text evidence="1">Binds to the 23S rRNA.</text>
</comment>
<comment type="similarity">
    <text evidence="1">Belongs to the bacterial ribosomal protein bL9 family.</text>
</comment>
<accession>B7J913</accession>
<name>RL9_ACIF2</name>
<evidence type="ECO:0000255" key="1">
    <source>
        <dbReference type="HAMAP-Rule" id="MF_00503"/>
    </source>
</evidence>
<evidence type="ECO:0000305" key="2"/>